<protein>
    <recommendedName>
        <fullName evidence="1">Cell division protein SepF</fullName>
    </recommendedName>
</protein>
<gene>
    <name evidence="1" type="primary">sepF</name>
    <name type="ordered locus">ML0920</name>
</gene>
<dbReference type="EMBL" id="AL583920">
    <property type="protein sequence ID" value="CAC31301.1"/>
    <property type="molecule type" value="Genomic_DNA"/>
</dbReference>
<dbReference type="PIR" id="B87024">
    <property type="entry name" value="B87024"/>
</dbReference>
<dbReference type="RefSeq" id="NP_301703.1">
    <property type="nucleotide sequence ID" value="NC_002677.1"/>
</dbReference>
<dbReference type="RefSeq" id="WP_010908027.1">
    <property type="nucleotide sequence ID" value="NC_002677.1"/>
</dbReference>
<dbReference type="SMR" id="Q9CCE1"/>
<dbReference type="STRING" id="272631.gene:17574746"/>
<dbReference type="KEGG" id="mle:ML0920"/>
<dbReference type="PATRIC" id="fig|272631.5.peg.1663"/>
<dbReference type="Leproma" id="ML0920"/>
<dbReference type="eggNOG" id="COG1799">
    <property type="taxonomic scope" value="Bacteria"/>
</dbReference>
<dbReference type="HOGENOM" id="CLU_078499_0_0_11"/>
<dbReference type="OrthoDB" id="3731101at2"/>
<dbReference type="Proteomes" id="UP000000806">
    <property type="component" value="Chromosome"/>
</dbReference>
<dbReference type="GO" id="GO:0005737">
    <property type="term" value="C:cytoplasm"/>
    <property type="evidence" value="ECO:0007669"/>
    <property type="project" value="UniProtKB-SubCell"/>
</dbReference>
<dbReference type="GO" id="GO:0000917">
    <property type="term" value="P:division septum assembly"/>
    <property type="evidence" value="ECO:0007669"/>
    <property type="project" value="UniProtKB-KW"/>
</dbReference>
<dbReference type="GO" id="GO:0043093">
    <property type="term" value="P:FtsZ-dependent cytokinesis"/>
    <property type="evidence" value="ECO:0007669"/>
    <property type="project" value="UniProtKB-UniRule"/>
</dbReference>
<dbReference type="FunFam" id="3.30.110.150:FF:000001">
    <property type="entry name" value="Cell division protein SepF"/>
    <property type="match status" value="1"/>
</dbReference>
<dbReference type="Gene3D" id="3.30.110.150">
    <property type="entry name" value="SepF-like protein"/>
    <property type="match status" value="1"/>
</dbReference>
<dbReference type="HAMAP" id="MF_01197">
    <property type="entry name" value="SepF"/>
    <property type="match status" value="1"/>
</dbReference>
<dbReference type="InterPro" id="IPR023052">
    <property type="entry name" value="Cell_div_SepF"/>
</dbReference>
<dbReference type="InterPro" id="IPR007561">
    <property type="entry name" value="Cell_div_SepF/SepF-rel"/>
</dbReference>
<dbReference type="InterPro" id="IPR038594">
    <property type="entry name" value="SepF-like_sf"/>
</dbReference>
<dbReference type="PANTHER" id="PTHR35798">
    <property type="entry name" value="CELL DIVISION PROTEIN SEPF"/>
    <property type="match status" value="1"/>
</dbReference>
<dbReference type="PANTHER" id="PTHR35798:SF1">
    <property type="entry name" value="CELL DIVISION PROTEIN SEPF"/>
    <property type="match status" value="1"/>
</dbReference>
<dbReference type="Pfam" id="PF04472">
    <property type="entry name" value="SepF"/>
    <property type="match status" value="1"/>
</dbReference>
<name>SEPF_MYCLE</name>
<accession>Q9CCE1</accession>
<sequence>MSTLHKVKAYFGMAPMEDYDDEYYDDRSPTHGYGRSRFEEGYGRYEGRDYSDLRGDPTGYLPLGYRGGYGDEHRFRPREFDRPDLSRPRLGSWLRNSTRGALAMDPRRMAMLFDEGSPLSKITTLRPKDYSEARTIGERFRDGTPVIIDLVSMDNADAKRLVDFAAGLAFALRGSFDKVATKVFLLSPADVDVSPEERRRIAETGFYAYQ</sequence>
<keyword id="KW-0131">Cell cycle</keyword>
<keyword id="KW-0132">Cell division</keyword>
<keyword id="KW-0963">Cytoplasm</keyword>
<keyword id="KW-1185">Reference proteome</keyword>
<keyword id="KW-0717">Septation</keyword>
<organism>
    <name type="scientific">Mycobacterium leprae (strain TN)</name>
    <dbReference type="NCBI Taxonomy" id="272631"/>
    <lineage>
        <taxon>Bacteria</taxon>
        <taxon>Bacillati</taxon>
        <taxon>Actinomycetota</taxon>
        <taxon>Actinomycetes</taxon>
        <taxon>Mycobacteriales</taxon>
        <taxon>Mycobacteriaceae</taxon>
        <taxon>Mycobacterium</taxon>
    </lineage>
</organism>
<feature type="chain" id="PRO_0000334041" description="Cell division protein SepF">
    <location>
        <begin position="1"/>
        <end position="210"/>
    </location>
</feature>
<comment type="function">
    <text evidence="1">Cell division protein that is part of the divisome complex and is recruited early to the Z-ring. Probably stimulates Z-ring formation, perhaps through the cross-linking of FtsZ protofilaments. Its function overlaps with FtsA.</text>
</comment>
<comment type="subunit">
    <text evidence="1">Homodimer. Interacts with FtsZ.</text>
</comment>
<comment type="subcellular location">
    <subcellularLocation>
        <location evidence="1">Cytoplasm</location>
    </subcellularLocation>
    <text evidence="1">Localizes to the division site, in a FtsZ-dependent manner.</text>
</comment>
<comment type="similarity">
    <text evidence="1">Belongs to the SepF family.</text>
</comment>
<evidence type="ECO:0000255" key="1">
    <source>
        <dbReference type="HAMAP-Rule" id="MF_01197"/>
    </source>
</evidence>
<reference key="1">
    <citation type="journal article" date="2001" name="Nature">
        <title>Massive gene decay in the leprosy bacillus.</title>
        <authorList>
            <person name="Cole S.T."/>
            <person name="Eiglmeier K."/>
            <person name="Parkhill J."/>
            <person name="James K.D."/>
            <person name="Thomson N.R."/>
            <person name="Wheeler P.R."/>
            <person name="Honore N."/>
            <person name="Garnier T."/>
            <person name="Churcher C.M."/>
            <person name="Harris D.E."/>
            <person name="Mungall K.L."/>
            <person name="Basham D."/>
            <person name="Brown D."/>
            <person name="Chillingworth T."/>
            <person name="Connor R."/>
            <person name="Davies R.M."/>
            <person name="Devlin K."/>
            <person name="Duthoy S."/>
            <person name="Feltwell T."/>
            <person name="Fraser A."/>
            <person name="Hamlin N."/>
            <person name="Holroyd S."/>
            <person name="Hornsby T."/>
            <person name="Jagels K."/>
            <person name="Lacroix C."/>
            <person name="Maclean J."/>
            <person name="Moule S."/>
            <person name="Murphy L.D."/>
            <person name="Oliver K."/>
            <person name="Quail M.A."/>
            <person name="Rajandream M.A."/>
            <person name="Rutherford K.M."/>
            <person name="Rutter S."/>
            <person name="Seeger K."/>
            <person name="Simon S."/>
            <person name="Simmonds M."/>
            <person name="Skelton J."/>
            <person name="Squares R."/>
            <person name="Squares S."/>
            <person name="Stevens K."/>
            <person name="Taylor K."/>
            <person name="Whitehead S."/>
            <person name="Woodward J.R."/>
            <person name="Barrell B.G."/>
        </authorList>
    </citation>
    <scope>NUCLEOTIDE SEQUENCE [LARGE SCALE GENOMIC DNA]</scope>
    <source>
        <strain>TN</strain>
    </source>
</reference>
<proteinExistence type="inferred from homology"/>